<accession>Q43794</accession>
<organism>
    <name type="scientific">Nicotiana tabacum</name>
    <name type="common">Common tobacco</name>
    <dbReference type="NCBI Taxonomy" id="4097"/>
    <lineage>
        <taxon>Eukaryota</taxon>
        <taxon>Viridiplantae</taxon>
        <taxon>Streptophyta</taxon>
        <taxon>Embryophyta</taxon>
        <taxon>Tracheophyta</taxon>
        <taxon>Spermatophyta</taxon>
        <taxon>Magnoliopsida</taxon>
        <taxon>eudicotyledons</taxon>
        <taxon>Gunneridae</taxon>
        <taxon>Pentapetalae</taxon>
        <taxon>asterids</taxon>
        <taxon>lamiids</taxon>
        <taxon>Solanales</taxon>
        <taxon>Solanaceae</taxon>
        <taxon>Nicotianoideae</taxon>
        <taxon>Nicotianeae</taxon>
        <taxon>Nicotiana</taxon>
    </lineage>
</organism>
<comment type="function">
    <text evidence="1">Catalyzes the attachment of glutamate to tRNA(Glu) in a two-step reaction: glutamate is first activated by ATP to form Glu-AMP and then transferred to the acceptor end of tRNA(Glu).</text>
</comment>
<comment type="catalytic activity">
    <reaction>
        <text>tRNA(Glu) + L-glutamate + ATP = L-glutamyl-tRNA(Glu) + AMP + diphosphate</text>
        <dbReference type="Rhea" id="RHEA:23540"/>
        <dbReference type="Rhea" id="RHEA-COMP:9663"/>
        <dbReference type="Rhea" id="RHEA-COMP:9680"/>
        <dbReference type="ChEBI" id="CHEBI:29985"/>
        <dbReference type="ChEBI" id="CHEBI:30616"/>
        <dbReference type="ChEBI" id="CHEBI:33019"/>
        <dbReference type="ChEBI" id="CHEBI:78442"/>
        <dbReference type="ChEBI" id="CHEBI:78520"/>
        <dbReference type="ChEBI" id="CHEBI:456215"/>
        <dbReference type="EC" id="6.1.1.17"/>
    </reaction>
</comment>
<comment type="subcellular location">
    <subcellularLocation>
        <location evidence="3">Plastid</location>
        <location evidence="3">Chloroplast</location>
    </subcellularLocation>
    <subcellularLocation>
        <location evidence="3">Mitochondrion</location>
    </subcellularLocation>
</comment>
<comment type="similarity">
    <text evidence="3">Belongs to the class-I aminoacyl-tRNA synthetase family. Glutamate--tRNA ligase type 1 subfamily.</text>
</comment>
<proteinExistence type="evidence at transcript level"/>
<protein>
    <recommendedName>
        <fullName>Glutamate--tRNA ligase, chloroplastic/mitochondrial</fullName>
        <ecNumber>6.1.1.17</ecNumber>
    </recommendedName>
    <alternativeName>
        <fullName>Glutamyl-tRNA synthetase</fullName>
        <shortName>GluRS</shortName>
    </alternativeName>
</protein>
<evidence type="ECO:0000250" key="1"/>
<evidence type="ECO:0000255" key="2"/>
<evidence type="ECO:0000305" key="3"/>
<keyword id="KW-0030">Aminoacyl-tRNA synthetase</keyword>
<keyword id="KW-0067">ATP-binding</keyword>
<keyword id="KW-0150">Chloroplast</keyword>
<keyword id="KW-0436">Ligase</keyword>
<keyword id="KW-0496">Mitochondrion</keyword>
<keyword id="KW-0547">Nucleotide-binding</keyword>
<keyword id="KW-0934">Plastid</keyword>
<keyword id="KW-0648">Protein biosynthesis</keyword>
<keyword id="KW-1185">Reference proteome</keyword>
<keyword id="KW-0694">RNA-binding</keyword>
<keyword id="KW-0809">Transit peptide</keyword>
<sequence length="569" mass="63338">MATLAAAPWFRVRLIPELKNSQSLLYCRGNHSYRQSLCSRRRSFSVYASAGDGGDVRVRFAPSPTGNLHVGGARTALFNYLYARAKGGKFILRIEDTDLERSTKESEEAVLRDLSWLGPAWDEGPGIGGEYGPYRQSERNALYKQFAEKLLQSGHVYRCFCSNEELEKMKEIAKLKQLPPVYTGRWASATEEEVVEELAKGTPYTYRFRVPKEGSLKIDDLIRGEVSWNLDTLGDFVIMRSNGQPVYNFCVTVDDATMAISHVIRAEEHLPNTLRQALIYKALGFPMPHFAHVSLILAPDRSKLSKRHGATSVGQFRDMGYLPQAMVNYLALLGWGDGTENEFFTLEQLVEKFTIERVNKSGAIFDSTKLRWMNGQHLRSLPSEELNRIIGERWKDAGIATESQGIFIQDAVLLLKDGIDLITDSEKALSSLLSYPLYETLASAEGKPILEDGVSEVAKSLLAAYDSGELSGALAEGQPGWQKWAKNFGKLLKRKGKSLFMPLRVLLTGKLHGPDIGATTVLLYKAGTSGSVVPQAGFVTFDERFKILREVQWESFSTDVPLSAGAVTR</sequence>
<dbReference type="EC" id="6.1.1.17"/>
<dbReference type="EMBL" id="X83524">
    <property type="protein sequence ID" value="CAA58506.1"/>
    <property type="molecule type" value="mRNA"/>
</dbReference>
<dbReference type="PIR" id="S51685">
    <property type="entry name" value="S51685"/>
</dbReference>
<dbReference type="RefSeq" id="NP_001312310.1">
    <property type="nucleotide sequence ID" value="NM_001325381.1"/>
</dbReference>
<dbReference type="SMR" id="Q43794"/>
<dbReference type="STRING" id="4097.Q43794"/>
<dbReference type="PaxDb" id="4097-Q43794"/>
<dbReference type="GeneID" id="107784556"/>
<dbReference type="KEGG" id="nta:107784556"/>
<dbReference type="OrthoDB" id="1214976at2759"/>
<dbReference type="Proteomes" id="UP000084051">
    <property type="component" value="Unplaced"/>
</dbReference>
<dbReference type="GO" id="GO:0009507">
    <property type="term" value="C:chloroplast"/>
    <property type="evidence" value="ECO:0007669"/>
    <property type="project" value="UniProtKB-SubCell"/>
</dbReference>
<dbReference type="GO" id="GO:0005739">
    <property type="term" value="C:mitochondrion"/>
    <property type="evidence" value="ECO:0000318"/>
    <property type="project" value="GO_Central"/>
</dbReference>
<dbReference type="GO" id="GO:0005524">
    <property type="term" value="F:ATP binding"/>
    <property type="evidence" value="ECO:0007669"/>
    <property type="project" value="UniProtKB-KW"/>
</dbReference>
<dbReference type="GO" id="GO:0004818">
    <property type="term" value="F:glutamate-tRNA ligase activity"/>
    <property type="evidence" value="ECO:0000318"/>
    <property type="project" value="GO_Central"/>
</dbReference>
<dbReference type="GO" id="GO:0000049">
    <property type="term" value="F:tRNA binding"/>
    <property type="evidence" value="ECO:0007669"/>
    <property type="project" value="InterPro"/>
</dbReference>
<dbReference type="GO" id="GO:0008270">
    <property type="term" value="F:zinc ion binding"/>
    <property type="evidence" value="ECO:0007669"/>
    <property type="project" value="InterPro"/>
</dbReference>
<dbReference type="GO" id="GO:0006424">
    <property type="term" value="P:glutamyl-tRNA aminoacylation"/>
    <property type="evidence" value="ECO:0000318"/>
    <property type="project" value="GO_Central"/>
</dbReference>
<dbReference type="GO" id="GO:0009791">
    <property type="term" value="P:post-embryonic development"/>
    <property type="evidence" value="ECO:0007669"/>
    <property type="project" value="UniProtKB-ARBA"/>
</dbReference>
<dbReference type="GO" id="GO:0048608">
    <property type="term" value="P:reproductive structure development"/>
    <property type="evidence" value="ECO:0007669"/>
    <property type="project" value="UniProtKB-ARBA"/>
</dbReference>
<dbReference type="CDD" id="cd00808">
    <property type="entry name" value="GluRS_core"/>
    <property type="match status" value="1"/>
</dbReference>
<dbReference type="FunFam" id="1.10.10.350:FF:000004">
    <property type="entry name" value="Glutamate--tRNA ligase chloroplastic/mitochondrial"/>
    <property type="match status" value="1"/>
</dbReference>
<dbReference type="FunFam" id="3.40.50.620:FF:000045">
    <property type="entry name" value="Glutamate--tRNA ligase, mitochondrial"/>
    <property type="match status" value="1"/>
</dbReference>
<dbReference type="Gene3D" id="1.10.10.350">
    <property type="match status" value="1"/>
</dbReference>
<dbReference type="Gene3D" id="3.40.50.620">
    <property type="entry name" value="HUPs"/>
    <property type="match status" value="1"/>
</dbReference>
<dbReference type="HAMAP" id="MF_00022">
    <property type="entry name" value="Glu_tRNA_synth_type1"/>
    <property type="match status" value="1"/>
</dbReference>
<dbReference type="InterPro" id="IPR020751">
    <property type="entry name" value="aa-tRNA-synth_I_codon-bd_sub2"/>
</dbReference>
<dbReference type="InterPro" id="IPR001412">
    <property type="entry name" value="aa-tRNA-synth_I_CS"/>
</dbReference>
<dbReference type="InterPro" id="IPR008925">
    <property type="entry name" value="aa_tRNA-synth_I_cd-bd_sf"/>
</dbReference>
<dbReference type="InterPro" id="IPR004527">
    <property type="entry name" value="Glu-tRNA-ligase_bac/mito"/>
</dbReference>
<dbReference type="InterPro" id="IPR000924">
    <property type="entry name" value="Glu/Gln-tRNA-synth"/>
</dbReference>
<dbReference type="InterPro" id="IPR020058">
    <property type="entry name" value="Glu/Gln-tRNA-synth_Ib_cat-dom"/>
</dbReference>
<dbReference type="InterPro" id="IPR049940">
    <property type="entry name" value="GluQ/Sye"/>
</dbReference>
<dbReference type="InterPro" id="IPR033910">
    <property type="entry name" value="GluRS_core"/>
</dbReference>
<dbReference type="InterPro" id="IPR014729">
    <property type="entry name" value="Rossmann-like_a/b/a_fold"/>
</dbReference>
<dbReference type="NCBIfam" id="TIGR00464">
    <property type="entry name" value="gltX_bact"/>
    <property type="match status" value="1"/>
</dbReference>
<dbReference type="PANTHER" id="PTHR43311">
    <property type="entry name" value="GLUTAMATE--TRNA LIGASE"/>
    <property type="match status" value="1"/>
</dbReference>
<dbReference type="PANTHER" id="PTHR43311:SF2">
    <property type="entry name" value="GLUTAMATE--TRNA LIGASE, MITOCHONDRIAL-RELATED"/>
    <property type="match status" value="1"/>
</dbReference>
<dbReference type="Pfam" id="PF00749">
    <property type="entry name" value="tRNA-synt_1c"/>
    <property type="match status" value="1"/>
</dbReference>
<dbReference type="PRINTS" id="PR00987">
    <property type="entry name" value="TRNASYNTHGLU"/>
</dbReference>
<dbReference type="SUPFAM" id="SSF48163">
    <property type="entry name" value="An anticodon-binding domain of class I aminoacyl-tRNA synthetases"/>
    <property type="match status" value="1"/>
</dbReference>
<dbReference type="SUPFAM" id="SSF52374">
    <property type="entry name" value="Nucleotidylyl transferase"/>
    <property type="match status" value="1"/>
</dbReference>
<dbReference type="PROSITE" id="PS00178">
    <property type="entry name" value="AA_TRNA_LIGASE_I"/>
    <property type="match status" value="1"/>
</dbReference>
<name>SYE_TOBAC</name>
<reference key="1">
    <citation type="submission" date="1994-12" db="EMBL/GenBank/DDBJ databases">
        <authorList>
            <person name="Andersen R.V."/>
        </authorList>
    </citation>
    <scope>NUCLEOTIDE SEQUENCE [MRNA]</scope>
    <source>
        <strain>cv. SR1</strain>
        <tissue>Leaf</tissue>
    </source>
</reference>
<feature type="transit peptide" description="Chloroplast and mitochondrion" evidence="2">
    <location>
        <begin position="1"/>
        <end status="unknown"/>
    </location>
</feature>
<feature type="chain" id="PRO_0000119737" description="Glutamate--tRNA ligase, chloroplastic/mitochondrial">
    <location>
        <begin status="unknown"/>
        <end position="569"/>
    </location>
</feature>
<feature type="short sequence motif" description="'HIGH' region">
    <location>
        <begin position="62"/>
        <end position="72"/>
    </location>
</feature>
<feature type="short sequence motif" description="'KMSKS' region">
    <location>
        <begin position="303"/>
        <end position="307"/>
    </location>
</feature>
<feature type="binding site" evidence="1">
    <location>
        <begin position="59"/>
        <end position="61"/>
    </location>
    <ligand>
        <name>L-glutamate</name>
        <dbReference type="ChEBI" id="CHEBI:29985"/>
    </ligand>
</feature>
<feature type="binding site" evidence="1">
    <location>
        <position position="69"/>
    </location>
    <ligand>
        <name>ATP</name>
        <dbReference type="ChEBI" id="CHEBI:30616"/>
    </ligand>
</feature>
<feature type="binding site" evidence="1">
    <location>
        <position position="95"/>
    </location>
    <ligand>
        <name>L-glutamate</name>
        <dbReference type="ChEBI" id="CHEBI:29985"/>
    </ligand>
</feature>
<feature type="binding site" evidence="1">
    <location>
        <begin position="247"/>
        <end position="251"/>
    </location>
    <ligand>
        <name>L-glutamate</name>
        <dbReference type="ChEBI" id="CHEBI:29985"/>
    </ligand>
</feature>
<feature type="binding site" evidence="1">
    <location>
        <position position="265"/>
    </location>
    <ligand>
        <name>L-glutamate</name>
        <dbReference type="ChEBI" id="CHEBI:29985"/>
    </ligand>
</feature>
<feature type="binding site" evidence="1">
    <location>
        <position position="268"/>
    </location>
    <ligand>
        <name>ATP</name>
        <dbReference type="ChEBI" id="CHEBI:30616"/>
    </ligand>
</feature>
<feature type="binding site" evidence="1">
    <location>
        <begin position="303"/>
        <end position="307"/>
    </location>
    <ligand>
        <name>ATP</name>
        <dbReference type="ChEBI" id="CHEBI:30616"/>
    </ligand>
</feature>